<organism>
    <name type="scientific">Schizosaccharomyces pombe (strain 972 / ATCC 24843)</name>
    <name type="common">Fission yeast</name>
    <dbReference type="NCBI Taxonomy" id="284812"/>
    <lineage>
        <taxon>Eukaryota</taxon>
        <taxon>Fungi</taxon>
        <taxon>Dikarya</taxon>
        <taxon>Ascomycota</taxon>
        <taxon>Taphrinomycotina</taxon>
        <taxon>Schizosaccharomycetes</taxon>
        <taxon>Schizosaccharomycetales</taxon>
        <taxon>Schizosaccharomycetaceae</taxon>
        <taxon>Schizosaccharomyces</taxon>
    </lineage>
</organism>
<name>VPS17_SCHPO</name>
<sequence length="549" mass="60921">MSSQHSTDDLMNSHVFSGGFSTLDDKGFQDVPIHTDMPGSISVEPSSEDANVGSVNGNINETPVFEADRLIAEATMNPSAASSTTGENSISQTGSGPFLRIRIVDIEAENSKDPVIKMNVQTTLPAYRSKLYKNVRRTHAEFKKFAKYLISTHPECLIPAVPEAKTSVSSGIKEDLIYLKSGLQSWLNYVSTNPNLLYDPELQLFVESDYGYSPLINTGNPTSGLKRKALKQFPLPPDPCQALANLRPIVKSFYKNAKDAEIKLEKLVNRKQSLALTHADLGQSLIDYSVEEQHNGLANALNRVGKMLQAISDVRIMQSSKQLVTLADSLCYASDNAFVVKEILSNRHILMRDLISSKNQTNSYLSAANRLQDSPKISKARTDDALQALEVARVHEKLLSDKVDFVTLNLVKESKTYTKKTSVSLQKAIREYVEKEAYYERRLLSIMESIRPHIRNIDPFGGLSRLGREEYPRRLSNPPPSQKTNQDAWTNRKRPGYSSSFDGSSQSTFNPSNNDGAHNTSENADELVEPPIGNERLDPKSVANLLNAI</sequence>
<gene>
    <name type="primary">vps17</name>
    <name type="ORF">SPAPJ696.01c</name>
</gene>
<protein>
    <recommendedName>
        <fullName>Vacuolar protein sorting-associated protein 17</fullName>
    </recommendedName>
</protein>
<proteinExistence type="inferred from homology"/>
<keyword id="KW-0175">Coiled coil</keyword>
<keyword id="KW-0963">Cytoplasm</keyword>
<keyword id="KW-0539">Nucleus</keyword>
<keyword id="KW-0653">Protein transport</keyword>
<keyword id="KW-1185">Reference proteome</keyword>
<keyword id="KW-0813">Transport</keyword>
<reference key="1">
    <citation type="journal article" date="2002" name="Nature">
        <title>The genome sequence of Schizosaccharomyces pombe.</title>
        <authorList>
            <person name="Wood V."/>
            <person name="Gwilliam R."/>
            <person name="Rajandream M.A."/>
            <person name="Lyne M.H."/>
            <person name="Lyne R."/>
            <person name="Stewart A."/>
            <person name="Sgouros J.G."/>
            <person name="Peat N."/>
            <person name="Hayles J."/>
            <person name="Baker S.G."/>
            <person name="Basham D."/>
            <person name="Bowman S."/>
            <person name="Brooks K."/>
            <person name="Brown D."/>
            <person name="Brown S."/>
            <person name="Chillingworth T."/>
            <person name="Churcher C.M."/>
            <person name="Collins M."/>
            <person name="Connor R."/>
            <person name="Cronin A."/>
            <person name="Davis P."/>
            <person name="Feltwell T."/>
            <person name="Fraser A."/>
            <person name="Gentles S."/>
            <person name="Goble A."/>
            <person name="Hamlin N."/>
            <person name="Harris D.E."/>
            <person name="Hidalgo J."/>
            <person name="Hodgson G."/>
            <person name="Holroyd S."/>
            <person name="Hornsby T."/>
            <person name="Howarth S."/>
            <person name="Huckle E.J."/>
            <person name="Hunt S."/>
            <person name="Jagels K."/>
            <person name="James K.D."/>
            <person name="Jones L."/>
            <person name="Jones M."/>
            <person name="Leather S."/>
            <person name="McDonald S."/>
            <person name="McLean J."/>
            <person name="Mooney P."/>
            <person name="Moule S."/>
            <person name="Mungall K.L."/>
            <person name="Murphy L.D."/>
            <person name="Niblett D."/>
            <person name="Odell C."/>
            <person name="Oliver K."/>
            <person name="O'Neil S."/>
            <person name="Pearson D."/>
            <person name="Quail M.A."/>
            <person name="Rabbinowitsch E."/>
            <person name="Rutherford K.M."/>
            <person name="Rutter S."/>
            <person name="Saunders D."/>
            <person name="Seeger K."/>
            <person name="Sharp S."/>
            <person name="Skelton J."/>
            <person name="Simmonds M.N."/>
            <person name="Squares R."/>
            <person name="Squares S."/>
            <person name="Stevens K."/>
            <person name="Taylor K."/>
            <person name="Taylor R.G."/>
            <person name="Tivey A."/>
            <person name="Walsh S.V."/>
            <person name="Warren T."/>
            <person name="Whitehead S."/>
            <person name="Woodward J.R."/>
            <person name="Volckaert G."/>
            <person name="Aert R."/>
            <person name="Robben J."/>
            <person name="Grymonprez B."/>
            <person name="Weltjens I."/>
            <person name="Vanstreels E."/>
            <person name="Rieger M."/>
            <person name="Schaefer M."/>
            <person name="Mueller-Auer S."/>
            <person name="Gabel C."/>
            <person name="Fuchs M."/>
            <person name="Duesterhoeft A."/>
            <person name="Fritzc C."/>
            <person name="Holzer E."/>
            <person name="Moestl D."/>
            <person name="Hilbert H."/>
            <person name="Borzym K."/>
            <person name="Langer I."/>
            <person name="Beck A."/>
            <person name="Lehrach H."/>
            <person name="Reinhardt R."/>
            <person name="Pohl T.M."/>
            <person name="Eger P."/>
            <person name="Zimmermann W."/>
            <person name="Wedler H."/>
            <person name="Wambutt R."/>
            <person name="Purnelle B."/>
            <person name="Goffeau A."/>
            <person name="Cadieu E."/>
            <person name="Dreano S."/>
            <person name="Gloux S."/>
            <person name="Lelaure V."/>
            <person name="Mottier S."/>
            <person name="Galibert F."/>
            <person name="Aves S.J."/>
            <person name="Xiang Z."/>
            <person name="Hunt C."/>
            <person name="Moore K."/>
            <person name="Hurst S.M."/>
            <person name="Lucas M."/>
            <person name="Rochet M."/>
            <person name="Gaillardin C."/>
            <person name="Tallada V.A."/>
            <person name="Garzon A."/>
            <person name="Thode G."/>
            <person name="Daga R.R."/>
            <person name="Cruzado L."/>
            <person name="Jimenez J."/>
            <person name="Sanchez M."/>
            <person name="del Rey F."/>
            <person name="Benito J."/>
            <person name="Dominguez A."/>
            <person name="Revuelta J.L."/>
            <person name="Moreno S."/>
            <person name="Armstrong J."/>
            <person name="Forsburg S.L."/>
            <person name="Cerutti L."/>
            <person name="Lowe T."/>
            <person name="McCombie W.R."/>
            <person name="Paulsen I."/>
            <person name="Potashkin J."/>
            <person name="Shpakovski G.V."/>
            <person name="Ussery D."/>
            <person name="Barrell B.G."/>
            <person name="Nurse P."/>
        </authorList>
    </citation>
    <scope>NUCLEOTIDE SEQUENCE [LARGE SCALE GENOMIC DNA]</scope>
    <source>
        <strain>972 / ATCC 24843</strain>
    </source>
</reference>
<reference key="2">
    <citation type="journal article" date="2006" name="Microbiology">
        <title>Vacuolar protein sorting receptor in Schizosaccharomyces pombe.</title>
        <authorList>
            <person name="Iwaki T."/>
            <person name="Hosomi A."/>
            <person name="Tokudomi S."/>
            <person name="Kusunoki Y."/>
            <person name="Fujita Y."/>
            <person name="Giga-Hama Y."/>
            <person name="Tanaka N."/>
            <person name="Takegawa K."/>
        </authorList>
    </citation>
    <scope>FUNCTION</scope>
</reference>
<reference key="3">
    <citation type="journal article" date="2006" name="Nat. Biotechnol.">
        <title>ORFeome cloning and global analysis of protein localization in the fission yeast Schizosaccharomyces pombe.</title>
        <authorList>
            <person name="Matsuyama A."/>
            <person name="Arai R."/>
            <person name="Yashiroda Y."/>
            <person name="Shirai A."/>
            <person name="Kamata A."/>
            <person name="Sekido S."/>
            <person name="Kobayashi Y."/>
            <person name="Hashimoto A."/>
            <person name="Hamamoto M."/>
            <person name="Hiraoka Y."/>
            <person name="Horinouchi S."/>
            <person name="Yoshida M."/>
        </authorList>
    </citation>
    <scope>SUBCELLULAR LOCATION [LARGE SCALE ANALYSIS]</scope>
</reference>
<evidence type="ECO:0000250" key="1"/>
<evidence type="ECO:0000255" key="2"/>
<evidence type="ECO:0000256" key="3">
    <source>
        <dbReference type="SAM" id="MobiDB-lite"/>
    </source>
</evidence>
<evidence type="ECO:0000269" key="4">
    <source>
    </source>
</evidence>
<evidence type="ECO:0000269" key="5">
    <source>
    </source>
</evidence>
<evidence type="ECO:0000305" key="6"/>
<comment type="function">
    <text evidence="4">Plays a role in vesicular protein sorting. Required for the endosome-to-Golgi retrieval of the vacuolar protein sorting receptor pep1/vps10. Component of the membrane-associated retromer complex which is essential in endosome-to-Golgi retrograde transport. The vps29-vps26-vps35 subcomplex may be involved in cargo selection.</text>
</comment>
<comment type="subunit">
    <text evidence="1">Component of the retromer complex which consists of vps29, vps6, vps35, vps5 and vps17.</text>
</comment>
<comment type="subcellular location">
    <subcellularLocation>
        <location evidence="5">Cytoplasm</location>
    </subcellularLocation>
    <subcellularLocation>
        <location evidence="5">Nucleus</location>
    </subcellularLocation>
</comment>
<comment type="similarity">
    <text evidence="6">Belongs to the VPS17 family.</text>
</comment>
<dbReference type="EMBL" id="CU329670">
    <property type="protein sequence ID" value="CAB62421.1"/>
    <property type="molecule type" value="Genomic_DNA"/>
</dbReference>
<dbReference type="PIR" id="T50295">
    <property type="entry name" value="T50295"/>
</dbReference>
<dbReference type="RefSeq" id="NP_593047.1">
    <property type="nucleotide sequence ID" value="NM_001018446.2"/>
</dbReference>
<dbReference type="SMR" id="Q9URW7"/>
<dbReference type="BioGRID" id="279747">
    <property type="interactions" value="144"/>
</dbReference>
<dbReference type="FunCoup" id="Q9URW7">
    <property type="interactions" value="51"/>
</dbReference>
<dbReference type="STRING" id="284812.Q9URW7"/>
<dbReference type="iPTMnet" id="Q9URW7"/>
<dbReference type="PaxDb" id="4896-SPAPJ696.01c.1"/>
<dbReference type="EnsemblFungi" id="SPAPJ696.01c.1">
    <property type="protein sequence ID" value="SPAPJ696.01c.1:pep"/>
    <property type="gene ID" value="SPAPJ696.01c"/>
</dbReference>
<dbReference type="GeneID" id="2543324"/>
<dbReference type="KEGG" id="spo:2543324"/>
<dbReference type="PomBase" id="SPAPJ696.01c">
    <property type="gene designation" value="vps17"/>
</dbReference>
<dbReference type="VEuPathDB" id="FungiDB:SPAPJ696.01c"/>
<dbReference type="eggNOG" id="KOG2273">
    <property type="taxonomic scope" value="Eukaryota"/>
</dbReference>
<dbReference type="HOGENOM" id="CLU_028982_0_0_1"/>
<dbReference type="InParanoid" id="Q9URW7"/>
<dbReference type="OMA" id="FYLGTME"/>
<dbReference type="PhylomeDB" id="Q9URW7"/>
<dbReference type="PRO" id="PR:Q9URW7"/>
<dbReference type="Proteomes" id="UP000002485">
    <property type="component" value="Chromosome I"/>
</dbReference>
<dbReference type="GO" id="GO:0005829">
    <property type="term" value="C:cytosol"/>
    <property type="evidence" value="ECO:0007005"/>
    <property type="project" value="PomBase"/>
</dbReference>
<dbReference type="GO" id="GO:0005768">
    <property type="term" value="C:endosome"/>
    <property type="evidence" value="ECO:0000318"/>
    <property type="project" value="GO_Central"/>
</dbReference>
<dbReference type="GO" id="GO:0005634">
    <property type="term" value="C:nucleus"/>
    <property type="evidence" value="ECO:0007005"/>
    <property type="project" value="PomBase"/>
</dbReference>
<dbReference type="GO" id="GO:0005628">
    <property type="term" value="C:prospore membrane"/>
    <property type="evidence" value="ECO:0000314"/>
    <property type="project" value="PomBase"/>
</dbReference>
<dbReference type="GO" id="GO:0030904">
    <property type="term" value="C:retromer complex"/>
    <property type="evidence" value="ECO:0000315"/>
    <property type="project" value="PomBase"/>
</dbReference>
<dbReference type="GO" id="GO:0030905">
    <property type="term" value="C:retromer, tubulation complex"/>
    <property type="evidence" value="ECO:0000318"/>
    <property type="project" value="GO_Central"/>
</dbReference>
<dbReference type="GO" id="GO:0032266">
    <property type="term" value="F:phosphatidylinositol-3-phosphate binding"/>
    <property type="evidence" value="ECO:0000318"/>
    <property type="project" value="GO_Central"/>
</dbReference>
<dbReference type="GO" id="GO:0032120">
    <property type="term" value="P:ascospore-type prospore membrane formation"/>
    <property type="evidence" value="ECO:0000315"/>
    <property type="project" value="PomBase"/>
</dbReference>
<dbReference type="GO" id="GO:0006886">
    <property type="term" value="P:intracellular protein transport"/>
    <property type="evidence" value="ECO:0000315"/>
    <property type="project" value="PomBase"/>
</dbReference>
<dbReference type="GO" id="GO:0042147">
    <property type="term" value="P:retrograde transport, endosome to Golgi"/>
    <property type="evidence" value="ECO:0000315"/>
    <property type="project" value="PomBase"/>
</dbReference>
<dbReference type="GO" id="GO:0016192">
    <property type="term" value="P:vesicle-mediated transport"/>
    <property type="evidence" value="ECO:0000315"/>
    <property type="project" value="PomBase"/>
</dbReference>
<dbReference type="CDD" id="cd06891">
    <property type="entry name" value="PX_Vps17p"/>
    <property type="match status" value="1"/>
</dbReference>
<dbReference type="FunFam" id="1.20.1270.60:FF:000046">
    <property type="entry name" value="Vacuolar protein sorting-associated protein 17"/>
    <property type="match status" value="1"/>
</dbReference>
<dbReference type="FunFam" id="3.30.1520.10:FF:000034">
    <property type="entry name" value="Vacuolar protein sorting-associated protein 17"/>
    <property type="match status" value="1"/>
</dbReference>
<dbReference type="Gene3D" id="1.20.1270.60">
    <property type="entry name" value="Arfaptin homology (AH) domain/BAR domain"/>
    <property type="match status" value="1"/>
</dbReference>
<dbReference type="Gene3D" id="3.30.1520.10">
    <property type="entry name" value="Phox-like domain"/>
    <property type="match status" value="1"/>
</dbReference>
<dbReference type="InterPro" id="IPR027267">
    <property type="entry name" value="AH/BAR_dom_sf"/>
</dbReference>
<dbReference type="InterPro" id="IPR001683">
    <property type="entry name" value="PX_dom"/>
</dbReference>
<dbReference type="InterPro" id="IPR036871">
    <property type="entry name" value="PX_dom_sf"/>
</dbReference>
<dbReference type="InterPro" id="IPR014461">
    <property type="entry name" value="Retromer_complex_Vps17"/>
</dbReference>
<dbReference type="InterPro" id="IPR053055">
    <property type="entry name" value="VPS17"/>
</dbReference>
<dbReference type="InterPro" id="IPR037907">
    <property type="entry name" value="Vps17_PX"/>
</dbReference>
<dbReference type="PANTHER" id="PTHR47433">
    <property type="entry name" value="VACUOLAR PROTEIN SORTING-ASSOCIATED PROTEIN 17"/>
    <property type="match status" value="1"/>
</dbReference>
<dbReference type="PANTHER" id="PTHR47433:SF1">
    <property type="entry name" value="VACUOLAR PROTEIN SORTING-ASSOCIATED PROTEIN 17"/>
    <property type="match status" value="1"/>
</dbReference>
<dbReference type="Pfam" id="PF00787">
    <property type="entry name" value="PX"/>
    <property type="match status" value="1"/>
</dbReference>
<dbReference type="PIRSF" id="PIRSF011791">
    <property type="entry name" value="Vps17"/>
    <property type="match status" value="1"/>
</dbReference>
<dbReference type="SMART" id="SM00312">
    <property type="entry name" value="PX"/>
    <property type="match status" value="1"/>
</dbReference>
<dbReference type="SUPFAM" id="SSF64268">
    <property type="entry name" value="PX domain"/>
    <property type="match status" value="1"/>
</dbReference>
<feature type="chain" id="PRO_0000339647" description="Vacuolar protein sorting-associated protein 17">
    <location>
        <begin position="1"/>
        <end position="549"/>
    </location>
</feature>
<feature type="domain" description="PX">
    <location>
        <begin position="96"/>
        <end position="213"/>
    </location>
</feature>
<feature type="region of interest" description="Disordered" evidence="3">
    <location>
        <begin position="470"/>
        <end position="540"/>
    </location>
</feature>
<feature type="coiled-coil region" evidence="2">
    <location>
        <begin position="250"/>
        <end position="281"/>
    </location>
</feature>
<feature type="compositionally biased region" description="Low complexity" evidence="3">
    <location>
        <begin position="498"/>
        <end position="507"/>
    </location>
</feature>
<feature type="compositionally biased region" description="Polar residues" evidence="3">
    <location>
        <begin position="508"/>
        <end position="522"/>
    </location>
</feature>
<accession>Q9URW7</accession>